<feature type="chain" id="PRO_0000403145" description="Chromophore lyase CpcS/CpeS">
    <location>
        <begin position="1"/>
        <end position="182"/>
    </location>
</feature>
<feature type="helix" evidence="2">
    <location>
        <begin position="7"/>
        <end position="14"/>
    </location>
</feature>
<feature type="strand" evidence="2">
    <location>
        <begin position="16"/>
        <end position="26"/>
    </location>
</feature>
<feature type="turn" evidence="2">
    <location>
        <begin position="27"/>
        <end position="30"/>
    </location>
</feature>
<feature type="strand" evidence="2">
    <location>
        <begin position="31"/>
        <end position="44"/>
    </location>
</feature>
<feature type="helix" evidence="2">
    <location>
        <begin position="49"/>
        <end position="57"/>
    </location>
</feature>
<feature type="turn" evidence="2">
    <location>
        <begin position="62"/>
        <end position="64"/>
    </location>
</feature>
<feature type="strand" evidence="2">
    <location>
        <begin position="68"/>
        <end position="74"/>
    </location>
</feature>
<feature type="strand" evidence="2">
    <location>
        <begin position="85"/>
        <end position="94"/>
    </location>
</feature>
<feature type="strand" evidence="2">
    <location>
        <begin position="99"/>
        <end position="106"/>
    </location>
</feature>
<feature type="strand" evidence="2">
    <location>
        <begin position="119"/>
        <end position="122"/>
    </location>
</feature>
<feature type="strand" evidence="2">
    <location>
        <begin position="128"/>
        <end position="133"/>
    </location>
</feature>
<feature type="strand" evidence="2">
    <location>
        <begin position="138"/>
        <end position="147"/>
    </location>
</feature>
<feature type="strand" evidence="2">
    <location>
        <begin position="150"/>
        <end position="159"/>
    </location>
</feature>
<feature type="strand" evidence="2">
    <location>
        <begin position="162"/>
        <end position="173"/>
    </location>
</feature>
<name>CPXS_THEVB</name>
<evidence type="ECO:0000255" key="1">
    <source>
        <dbReference type="HAMAP-Rule" id="MF_01459"/>
    </source>
</evidence>
<evidence type="ECO:0007829" key="2">
    <source>
        <dbReference type="PDB" id="3BDR"/>
    </source>
</evidence>
<sequence length="182" mass="20363">MCIGMDIRDFFAQSAGRWFSQRTSHHLAFKQTESGKSQLTIELLSVDDPAVIALCQQYDMDPAWAVCGARVSWDGTMEWDNEKHEGSTVLVPIMDQGSRMEGKLLREMGYAEKAPVAGRFSMGSDGALTLITEYETIYSEERLWFASPNLRLRTSILKRFGGFSMASFCSEIRLGVTQPANS</sequence>
<proteinExistence type="evidence at protein level"/>
<dbReference type="EC" id="4.-.-.-" evidence="1"/>
<dbReference type="EMBL" id="BA000039">
    <property type="protein sequence ID" value="BAC09251.1"/>
    <property type="molecule type" value="Genomic_DNA"/>
</dbReference>
<dbReference type="RefSeq" id="NP_682489.1">
    <property type="nucleotide sequence ID" value="NC_004113.1"/>
</dbReference>
<dbReference type="PDB" id="3BDR">
    <property type="method" value="X-ray"/>
    <property type="resolution" value="2.80 A"/>
    <property type="chains" value="A=1-182"/>
</dbReference>
<dbReference type="PDBsum" id="3BDR"/>
<dbReference type="SMR" id="Q8DI91"/>
<dbReference type="STRING" id="197221.gene:10748303"/>
<dbReference type="DNASU" id="1011181"/>
<dbReference type="EnsemblBacteria" id="BAC09251">
    <property type="protein sequence ID" value="BAC09251"/>
    <property type="gene ID" value="BAC09251"/>
</dbReference>
<dbReference type="KEGG" id="tel:tll1699"/>
<dbReference type="PATRIC" id="fig|197221.4.peg.1780"/>
<dbReference type="eggNOG" id="ENOG502Z8E6">
    <property type="taxonomic scope" value="Bacteria"/>
</dbReference>
<dbReference type="BRENDA" id="4.4.1.29">
    <property type="organism ID" value="7763"/>
</dbReference>
<dbReference type="EvolutionaryTrace" id="Q8DI91"/>
<dbReference type="Proteomes" id="UP000000440">
    <property type="component" value="Chromosome"/>
</dbReference>
<dbReference type="GO" id="GO:0016829">
    <property type="term" value="F:lyase activity"/>
    <property type="evidence" value="ECO:0007669"/>
    <property type="project" value="UniProtKB-KW"/>
</dbReference>
<dbReference type="CDD" id="cd19433">
    <property type="entry name" value="lipocalin_CpcS-CpeS"/>
    <property type="match status" value="1"/>
</dbReference>
<dbReference type="Gene3D" id="2.40.128.20">
    <property type="match status" value="1"/>
</dbReference>
<dbReference type="HAMAP" id="MF_01459">
    <property type="entry name" value="Chrphore_lyase_CpxS"/>
    <property type="match status" value="1"/>
</dbReference>
<dbReference type="InterPro" id="IPR012674">
    <property type="entry name" value="Calycin"/>
</dbReference>
<dbReference type="InterPro" id="IPR018536">
    <property type="entry name" value="CpcS/CpeS"/>
</dbReference>
<dbReference type="Pfam" id="PF09367">
    <property type="entry name" value="CpeS"/>
    <property type="match status" value="1"/>
</dbReference>
<comment type="function">
    <text evidence="1">Covalently attaches a chromophore to Cys residue(s) of phycobiliproteins.</text>
</comment>
<comment type="similarity">
    <text evidence="1">Belongs to the CpcS/CpeS biliprotein lyase family.</text>
</comment>
<keyword id="KW-0002">3D-structure</keyword>
<keyword id="KW-0456">Lyase</keyword>
<keyword id="KW-1185">Reference proteome</keyword>
<organism>
    <name type="scientific">Thermosynechococcus vestitus (strain NIES-2133 / IAM M-273 / BP-1)</name>
    <dbReference type="NCBI Taxonomy" id="197221"/>
    <lineage>
        <taxon>Bacteria</taxon>
        <taxon>Bacillati</taxon>
        <taxon>Cyanobacteriota</taxon>
        <taxon>Cyanophyceae</taxon>
        <taxon>Acaryochloridales</taxon>
        <taxon>Thermosynechococcaceae</taxon>
        <taxon>Thermosynechococcus</taxon>
    </lineage>
</organism>
<protein>
    <recommendedName>
        <fullName evidence="1">Chromophore lyase CpcS/CpeS</fullName>
        <ecNumber evidence="1">4.-.-.-</ecNumber>
    </recommendedName>
</protein>
<reference key="1">
    <citation type="journal article" date="2002" name="DNA Res.">
        <title>Complete genome structure of the thermophilic cyanobacterium Thermosynechococcus elongatus BP-1.</title>
        <authorList>
            <person name="Nakamura Y."/>
            <person name="Kaneko T."/>
            <person name="Sato S."/>
            <person name="Ikeuchi M."/>
            <person name="Katoh H."/>
            <person name="Sasamoto S."/>
            <person name="Watanabe A."/>
            <person name="Iriguchi M."/>
            <person name="Kawashima K."/>
            <person name="Kimura T."/>
            <person name="Kishida Y."/>
            <person name="Kiyokawa C."/>
            <person name="Kohara M."/>
            <person name="Matsumoto M."/>
            <person name="Matsuno A."/>
            <person name="Nakazaki N."/>
            <person name="Shimpo S."/>
            <person name="Sugimoto M."/>
            <person name="Takeuchi C."/>
            <person name="Yamada M."/>
            <person name="Tabata S."/>
        </authorList>
    </citation>
    <scope>NUCLEOTIDE SEQUENCE [LARGE SCALE GENOMIC DNA]</scope>
    <source>
        <strain>NIES-2133 / IAM M-273 / BP-1</strain>
    </source>
</reference>
<reference key="2">
    <citation type="submission" date="2009-02" db="PDB data bank">
        <title>The crystal structure of fatty acid-binding protein-like Ycf58 from Thermosynecoccus elongatus.</title>
        <authorList>
            <consortium name="Northeast structural genomics consortium (NESG)"/>
        </authorList>
    </citation>
    <scope>X-RAY CRYSTALLOGRAPHY (2.8 ANGSTROMS)</scope>
</reference>
<gene>
    <name evidence="1" type="primary">cpcS</name>
    <name type="ordered locus">tll1699</name>
</gene>
<accession>Q8DI91</accession>